<dbReference type="EMBL" id="CP001111">
    <property type="protein sequence ID" value="ACF50645.1"/>
    <property type="molecule type" value="Genomic_DNA"/>
</dbReference>
<dbReference type="RefSeq" id="WP_004147177.1">
    <property type="nucleotide sequence ID" value="NC_011071.1"/>
</dbReference>
<dbReference type="SMR" id="B4SMG8"/>
<dbReference type="STRING" id="391008.Smal_0940"/>
<dbReference type="KEGG" id="smt:Smal_0940"/>
<dbReference type="eggNOG" id="COG1678">
    <property type="taxonomic scope" value="Bacteria"/>
</dbReference>
<dbReference type="HOGENOM" id="CLU_057596_1_0_6"/>
<dbReference type="OrthoDB" id="9807486at2"/>
<dbReference type="Proteomes" id="UP000001867">
    <property type="component" value="Chromosome"/>
</dbReference>
<dbReference type="GO" id="GO:0005829">
    <property type="term" value="C:cytosol"/>
    <property type="evidence" value="ECO:0007669"/>
    <property type="project" value="TreeGrafter"/>
</dbReference>
<dbReference type="Gene3D" id="3.40.1740.10">
    <property type="entry name" value="VC0467-like"/>
    <property type="match status" value="1"/>
</dbReference>
<dbReference type="HAMAP" id="MF_00758">
    <property type="entry name" value="UPF0301"/>
    <property type="match status" value="1"/>
</dbReference>
<dbReference type="InterPro" id="IPR003774">
    <property type="entry name" value="AlgH-like"/>
</dbReference>
<dbReference type="NCBIfam" id="NF001266">
    <property type="entry name" value="PRK00228.1-1"/>
    <property type="match status" value="1"/>
</dbReference>
<dbReference type="PANTHER" id="PTHR30327">
    <property type="entry name" value="UNCHARACTERIZED PROTEIN YQGE"/>
    <property type="match status" value="1"/>
</dbReference>
<dbReference type="PANTHER" id="PTHR30327:SF1">
    <property type="entry name" value="UPF0301 PROTEIN YQGE"/>
    <property type="match status" value="1"/>
</dbReference>
<dbReference type="Pfam" id="PF02622">
    <property type="entry name" value="DUF179"/>
    <property type="match status" value="1"/>
</dbReference>
<dbReference type="SUPFAM" id="SSF143456">
    <property type="entry name" value="VC0467-like"/>
    <property type="match status" value="1"/>
</dbReference>
<feature type="chain" id="PRO_1000198303" description="UPF0301 protein Smal_0940">
    <location>
        <begin position="1"/>
        <end position="188"/>
    </location>
</feature>
<comment type="similarity">
    <text evidence="1">Belongs to the UPF0301 (AlgH) family.</text>
</comment>
<sequence length="188" mass="20067">MPVTPTSLADHLLVALPSLLDATFARSVALICQHDENGAMGVLVNQPSEYTLGEVLAQMDITTGDGDLQARMVLNGGPVHPERGFVIHDDARAWDSSLIVGEGLYLTTSRDILEAMARGEGPANAVVTLGCAGWGAGQLESELSENSWLTVPADAELVFQLPLEQRWQGAASRIGVDLFRLTDYSGHV</sequence>
<proteinExistence type="inferred from homology"/>
<evidence type="ECO:0000255" key="1">
    <source>
        <dbReference type="HAMAP-Rule" id="MF_00758"/>
    </source>
</evidence>
<reference key="1">
    <citation type="submission" date="2008-06" db="EMBL/GenBank/DDBJ databases">
        <title>Complete sequence of Stenotrophomonas maltophilia R551-3.</title>
        <authorList>
            <consortium name="US DOE Joint Genome Institute"/>
            <person name="Lucas S."/>
            <person name="Copeland A."/>
            <person name="Lapidus A."/>
            <person name="Glavina del Rio T."/>
            <person name="Dalin E."/>
            <person name="Tice H."/>
            <person name="Pitluck S."/>
            <person name="Chain P."/>
            <person name="Malfatti S."/>
            <person name="Shin M."/>
            <person name="Vergez L."/>
            <person name="Lang D."/>
            <person name="Schmutz J."/>
            <person name="Larimer F."/>
            <person name="Land M."/>
            <person name="Hauser L."/>
            <person name="Kyrpides N."/>
            <person name="Mikhailova N."/>
            <person name="Taghavi S."/>
            <person name="Monchy S."/>
            <person name="Newman L."/>
            <person name="Vangronsveld J."/>
            <person name="van der Lelie D."/>
            <person name="Richardson P."/>
        </authorList>
    </citation>
    <scope>NUCLEOTIDE SEQUENCE [LARGE SCALE GENOMIC DNA]</scope>
    <source>
        <strain>R551-3</strain>
    </source>
</reference>
<protein>
    <recommendedName>
        <fullName evidence="1">UPF0301 protein Smal_0940</fullName>
    </recommendedName>
</protein>
<accession>B4SMG8</accession>
<organism>
    <name type="scientific">Stenotrophomonas maltophilia (strain R551-3)</name>
    <dbReference type="NCBI Taxonomy" id="391008"/>
    <lineage>
        <taxon>Bacteria</taxon>
        <taxon>Pseudomonadati</taxon>
        <taxon>Pseudomonadota</taxon>
        <taxon>Gammaproteobacteria</taxon>
        <taxon>Lysobacterales</taxon>
        <taxon>Lysobacteraceae</taxon>
        <taxon>Stenotrophomonas</taxon>
        <taxon>Stenotrophomonas maltophilia group</taxon>
    </lineage>
</organism>
<name>Y940_STRM5</name>
<gene>
    <name type="ordered locus">Smal_0940</name>
</gene>